<dbReference type="EMBL" id="AJ306144">
    <property type="protein sequence ID" value="CAC83582.1"/>
    <property type="molecule type" value="Genomic_DNA"/>
</dbReference>
<dbReference type="EMBL" id="AC069160">
    <property type="protein sequence ID" value="AAG51462.1"/>
    <property type="molecule type" value="Genomic_DNA"/>
</dbReference>
<dbReference type="EMBL" id="CP002684">
    <property type="protein sequence ID" value="AEE31775.1"/>
    <property type="molecule type" value="Genomic_DNA"/>
</dbReference>
<dbReference type="EMBL" id="BT003667">
    <property type="protein sequence ID" value="AAO39895.1"/>
    <property type="molecule type" value="mRNA"/>
</dbReference>
<dbReference type="EMBL" id="AY085608">
    <property type="protein sequence ID" value="AAM62829.1"/>
    <property type="molecule type" value="mRNA"/>
</dbReference>
<dbReference type="PIR" id="F86473">
    <property type="entry name" value="F86473"/>
</dbReference>
<dbReference type="RefSeq" id="NP_564456.1">
    <property type="nucleotide sequence ID" value="NM_103224.2"/>
</dbReference>
<dbReference type="SMR" id="Q9C7I7"/>
<dbReference type="STRING" id="3702.Q9C7I7"/>
<dbReference type="PaxDb" id="3702-AT1G35260.1"/>
<dbReference type="ProteomicsDB" id="251415"/>
<dbReference type="EnsemblPlants" id="AT1G35260.1">
    <property type="protein sequence ID" value="AT1G35260.1"/>
    <property type="gene ID" value="AT1G35260"/>
</dbReference>
<dbReference type="GeneID" id="840415"/>
<dbReference type="Gramene" id="AT1G35260.1">
    <property type="protein sequence ID" value="AT1G35260.1"/>
    <property type="gene ID" value="AT1G35260"/>
</dbReference>
<dbReference type="KEGG" id="ath:AT1G35260"/>
<dbReference type="Araport" id="AT1G35260"/>
<dbReference type="TAIR" id="AT1G35260">
    <property type="gene designation" value="MLP165"/>
</dbReference>
<dbReference type="eggNOG" id="ENOG502RN75">
    <property type="taxonomic scope" value="Eukaryota"/>
</dbReference>
<dbReference type="HOGENOM" id="CLU_081988_1_0_1"/>
<dbReference type="InParanoid" id="Q9C7I7"/>
<dbReference type="OMA" id="WGMAGSI"/>
<dbReference type="OrthoDB" id="1847301at2759"/>
<dbReference type="PhylomeDB" id="Q9C7I7"/>
<dbReference type="PRO" id="PR:Q9C7I7"/>
<dbReference type="Proteomes" id="UP000006548">
    <property type="component" value="Chromosome 1"/>
</dbReference>
<dbReference type="ExpressionAtlas" id="Q9C7I7">
    <property type="expression patterns" value="baseline and differential"/>
</dbReference>
<dbReference type="GO" id="GO:0006952">
    <property type="term" value="P:defense response"/>
    <property type="evidence" value="ECO:0007669"/>
    <property type="project" value="InterPro"/>
</dbReference>
<dbReference type="CDD" id="cd07816">
    <property type="entry name" value="Bet_v1-like"/>
    <property type="match status" value="1"/>
</dbReference>
<dbReference type="Gene3D" id="3.30.530.20">
    <property type="match status" value="1"/>
</dbReference>
<dbReference type="InterPro" id="IPR000916">
    <property type="entry name" value="Bet_v_I/MLP"/>
</dbReference>
<dbReference type="InterPro" id="IPR051761">
    <property type="entry name" value="MLP-like_ligand-binding"/>
</dbReference>
<dbReference type="InterPro" id="IPR023393">
    <property type="entry name" value="START-like_dom_sf"/>
</dbReference>
<dbReference type="PANTHER" id="PTHR31907">
    <property type="entry name" value="MLP-LIKE PROTEIN 423"/>
    <property type="match status" value="1"/>
</dbReference>
<dbReference type="Pfam" id="PF00407">
    <property type="entry name" value="Bet_v_1"/>
    <property type="match status" value="1"/>
</dbReference>
<dbReference type="SMART" id="SM01037">
    <property type="entry name" value="Bet_v_1"/>
    <property type="match status" value="1"/>
</dbReference>
<dbReference type="SUPFAM" id="SSF55961">
    <property type="entry name" value="Bet v1-like"/>
    <property type="match status" value="1"/>
</dbReference>
<name>ML165_ARATH</name>
<sequence>MIEEEIEVDVDIKTRADKFHKFIRRSQHVPKATHYIKGCDLLEGEWGKVGSILLWKLVFDGEPRVSKDMIEVIDEEKNVIQLRVLEGPLKKEYKSFLKTMKVMSPKHGGPGSVVKWNMKYERIDQNVDHPNRLLQFFVEVTKEIDQYLLSKD</sequence>
<proteinExistence type="evidence at transcript level"/>
<reference key="1">
    <citation type="submission" date="2001-01" db="EMBL/GenBank/DDBJ databases">
        <title>Molecular and phylogenetic analysis of a gene family in Arabidopsis thaliana with similarities to major latex, pathogenesis-related and ripening-induced proteins.</title>
        <authorList>
            <person name="Muller S."/>
            <person name="Klimt S."/>
            <person name="Hauser M.T."/>
        </authorList>
    </citation>
    <scope>NUCLEOTIDE SEQUENCE [GENOMIC DNA]</scope>
    <source>
        <strain>cv. Columbia</strain>
    </source>
</reference>
<reference key="2">
    <citation type="journal article" date="2000" name="Nature">
        <title>Sequence and analysis of chromosome 1 of the plant Arabidopsis thaliana.</title>
        <authorList>
            <person name="Theologis A."/>
            <person name="Ecker J.R."/>
            <person name="Palm C.J."/>
            <person name="Federspiel N.A."/>
            <person name="Kaul S."/>
            <person name="White O."/>
            <person name="Alonso J."/>
            <person name="Altafi H."/>
            <person name="Araujo R."/>
            <person name="Bowman C.L."/>
            <person name="Brooks S.Y."/>
            <person name="Buehler E."/>
            <person name="Chan A."/>
            <person name="Chao Q."/>
            <person name="Chen H."/>
            <person name="Cheuk R.F."/>
            <person name="Chin C.W."/>
            <person name="Chung M.K."/>
            <person name="Conn L."/>
            <person name="Conway A.B."/>
            <person name="Conway A.R."/>
            <person name="Creasy T.H."/>
            <person name="Dewar K."/>
            <person name="Dunn P."/>
            <person name="Etgu P."/>
            <person name="Feldblyum T.V."/>
            <person name="Feng J.-D."/>
            <person name="Fong B."/>
            <person name="Fujii C.Y."/>
            <person name="Gill J.E."/>
            <person name="Goldsmith A.D."/>
            <person name="Haas B."/>
            <person name="Hansen N.F."/>
            <person name="Hughes B."/>
            <person name="Huizar L."/>
            <person name="Hunter J.L."/>
            <person name="Jenkins J."/>
            <person name="Johnson-Hopson C."/>
            <person name="Khan S."/>
            <person name="Khaykin E."/>
            <person name="Kim C.J."/>
            <person name="Koo H.L."/>
            <person name="Kremenetskaia I."/>
            <person name="Kurtz D.B."/>
            <person name="Kwan A."/>
            <person name="Lam B."/>
            <person name="Langin-Hooper S."/>
            <person name="Lee A."/>
            <person name="Lee J.M."/>
            <person name="Lenz C.A."/>
            <person name="Li J.H."/>
            <person name="Li Y.-P."/>
            <person name="Lin X."/>
            <person name="Liu S.X."/>
            <person name="Liu Z.A."/>
            <person name="Luros J.S."/>
            <person name="Maiti R."/>
            <person name="Marziali A."/>
            <person name="Militscher J."/>
            <person name="Miranda M."/>
            <person name="Nguyen M."/>
            <person name="Nierman W.C."/>
            <person name="Osborne B.I."/>
            <person name="Pai G."/>
            <person name="Peterson J."/>
            <person name="Pham P.K."/>
            <person name="Rizzo M."/>
            <person name="Rooney T."/>
            <person name="Rowley D."/>
            <person name="Sakano H."/>
            <person name="Salzberg S.L."/>
            <person name="Schwartz J.R."/>
            <person name="Shinn P."/>
            <person name="Southwick A.M."/>
            <person name="Sun H."/>
            <person name="Tallon L.J."/>
            <person name="Tambunga G."/>
            <person name="Toriumi M.J."/>
            <person name="Town C.D."/>
            <person name="Utterback T."/>
            <person name="Van Aken S."/>
            <person name="Vaysberg M."/>
            <person name="Vysotskaia V.S."/>
            <person name="Walker M."/>
            <person name="Wu D."/>
            <person name="Yu G."/>
            <person name="Fraser C.M."/>
            <person name="Venter J.C."/>
            <person name="Davis R.W."/>
        </authorList>
    </citation>
    <scope>NUCLEOTIDE SEQUENCE [LARGE SCALE GENOMIC DNA]</scope>
    <source>
        <strain>cv. Columbia</strain>
    </source>
</reference>
<reference key="3">
    <citation type="journal article" date="2017" name="Plant J.">
        <title>Araport11: a complete reannotation of the Arabidopsis thaliana reference genome.</title>
        <authorList>
            <person name="Cheng C.Y."/>
            <person name="Krishnakumar V."/>
            <person name="Chan A.P."/>
            <person name="Thibaud-Nissen F."/>
            <person name="Schobel S."/>
            <person name="Town C.D."/>
        </authorList>
    </citation>
    <scope>GENOME REANNOTATION</scope>
    <source>
        <strain>cv. Columbia</strain>
    </source>
</reference>
<reference key="4">
    <citation type="journal article" date="2003" name="Science">
        <title>Empirical analysis of transcriptional activity in the Arabidopsis genome.</title>
        <authorList>
            <person name="Yamada K."/>
            <person name="Lim J."/>
            <person name="Dale J.M."/>
            <person name="Chen H."/>
            <person name="Shinn P."/>
            <person name="Palm C.J."/>
            <person name="Southwick A.M."/>
            <person name="Wu H.C."/>
            <person name="Kim C.J."/>
            <person name="Nguyen M."/>
            <person name="Pham P.K."/>
            <person name="Cheuk R.F."/>
            <person name="Karlin-Newmann G."/>
            <person name="Liu S.X."/>
            <person name="Lam B."/>
            <person name="Sakano H."/>
            <person name="Wu T."/>
            <person name="Yu G."/>
            <person name="Miranda M."/>
            <person name="Quach H.L."/>
            <person name="Tripp M."/>
            <person name="Chang C.H."/>
            <person name="Lee J.M."/>
            <person name="Toriumi M.J."/>
            <person name="Chan M.M."/>
            <person name="Tang C.C."/>
            <person name="Onodera C.S."/>
            <person name="Deng J.M."/>
            <person name="Akiyama K."/>
            <person name="Ansari Y."/>
            <person name="Arakawa T."/>
            <person name="Banh J."/>
            <person name="Banno F."/>
            <person name="Bowser L."/>
            <person name="Brooks S.Y."/>
            <person name="Carninci P."/>
            <person name="Chao Q."/>
            <person name="Choy N."/>
            <person name="Enju A."/>
            <person name="Goldsmith A.D."/>
            <person name="Gurjal M."/>
            <person name="Hansen N.F."/>
            <person name="Hayashizaki Y."/>
            <person name="Johnson-Hopson C."/>
            <person name="Hsuan V.W."/>
            <person name="Iida K."/>
            <person name="Karnes M."/>
            <person name="Khan S."/>
            <person name="Koesema E."/>
            <person name="Ishida J."/>
            <person name="Jiang P.X."/>
            <person name="Jones T."/>
            <person name="Kawai J."/>
            <person name="Kamiya A."/>
            <person name="Meyers C."/>
            <person name="Nakajima M."/>
            <person name="Narusaka M."/>
            <person name="Seki M."/>
            <person name="Sakurai T."/>
            <person name="Satou M."/>
            <person name="Tamse R."/>
            <person name="Vaysberg M."/>
            <person name="Wallender E.K."/>
            <person name="Wong C."/>
            <person name="Yamamura Y."/>
            <person name="Yuan S."/>
            <person name="Shinozaki K."/>
            <person name="Davis R.W."/>
            <person name="Theologis A."/>
            <person name="Ecker J.R."/>
        </authorList>
    </citation>
    <scope>NUCLEOTIDE SEQUENCE [LARGE SCALE MRNA]</scope>
    <source>
        <strain>cv. Columbia</strain>
    </source>
</reference>
<reference key="5">
    <citation type="submission" date="2002-03" db="EMBL/GenBank/DDBJ databases">
        <title>Full-length cDNA from Arabidopsis thaliana.</title>
        <authorList>
            <person name="Brover V.V."/>
            <person name="Troukhan M.E."/>
            <person name="Alexandrov N.A."/>
            <person name="Lu Y.-P."/>
            <person name="Flavell R.B."/>
            <person name="Feldmann K.A."/>
        </authorList>
    </citation>
    <scope>NUCLEOTIDE SEQUENCE [LARGE SCALE MRNA]</scope>
</reference>
<keyword id="KW-1185">Reference proteome</keyword>
<evidence type="ECO:0000305" key="1"/>
<accession>Q9C7I7</accession>
<protein>
    <recommendedName>
        <fullName>MLP-like protein 165</fullName>
    </recommendedName>
</protein>
<organism>
    <name type="scientific">Arabidopsis thaliana</name>
    <name type="common">Mouse-ear cress</name>
    <dbReference type="NCBI Taxonomy" id="3702"/>
    <lineage>
        <taxon>Eukaryota</taxon>
        <taxon>Viridiplantae</taxon>
        <taxon>Streptophyta</taxon>
        <taxon>Embryophyta</taxon>
        <taxon>Tracheophyta</taxon>
        <taxon>Spermatophyta</taxon>
        <taxon>Magnoliopsida</taxon>
        <taxon>eudicotyledons</taxon>
        <taxon>Gunneridae</taxon>
        <taxon>Pentapetalae</taxon>
        <taxon>rosids</taxon>
        <taxon>malvids</taxon>
        <taxon>Brassicales</taxon>
        <taxon>Brassicaceae</taxon>
        <taxon>Camelineae</taxon>
        <taxon>Arabidopsis</taxon>
    </lineage>
</organism>
<comment type="similarity">
    <text evidence="1">Belongs to the MLP family.</text>
</comment>
<gene>
    <name type="primary">MLP165</name>
    <name type="ordered locus">At1g35260</name>
    <name type="ORF">T9I1.17</name>
</gene>
<feature type="chain" id="PRO_0000210072" description="MLP-like protein 165">
    <location>
        <begin position="1"/>
        <end position="152"/>
    </location>
</feature>